<organism>
    <name type="scientific">Pelotomaculum thermopropionicum (strain DSM 13744 / JCM 10971 / SI)</name>
    <dbReference type="NCBI Taxonomy" id="370438"/>
    <lineage>
        <taxon>Bacteria</taxon>
        <taxon>Bacillati</taxon>
        <taxon>Bacillota</taxon>
        <taxon>Clostridia</taxon>
        <taxon>Eubacteriales</taxon>
        <taxon>Desulfotomaculaceae</taxon>
        <taxon>Pelotomaculum</taxon>
    </lineage>
</organism>
<evidence type="ECO:0000255" key="1">
    <source>
        <dbReference type="HAMAP-Rule" id="MF_00041"/>
    </source>
</evidence>
<reference key="1">
    <citation type="journal article" date="2008" name="Genome Res.">
        <title>The genome of Pelotomaculum thermopropionicum reveals niche-associated evolution in anaerobic microbiota.</title>
        <authorList>
            <person name="Kosaka T."/>
            <person name="Kato S."/>
            <person name="Shimoyama T."/>
            <person name="Ishii S."/>
            <person name="Abe T."/>
            <person name="Watanabe K."/>
        </authorList>
    </citation>
    <scope>NUCLEOTIDE SEQUENCE [LARGE SCALE GENOMIC DNA]</scope>
    <source>
        <strain>DSM 13744 / JCM 10971 / SI</strain>
    </source>
</reference>
<keyword id="KW-0030">Aminoacyl-tRNA synthetase</keyword>
<keyword id="KW-0067">ATP-binding</keyword>
<keyword id="KW-0963">Cytoplasm</keyword>
<keyword id="KW-0436">Ligase</keyword>
<keyword id="KW-0479">Metal-binding</keyword>
<keyword id="KW-0547">Nucleotide-binding</keyword>
<keyword id="KW-0648">Protein biosynthesis</keyword>
<keyword id="KW-1185">Reference proteome</keyword>
<keyword id="KW-0862">Zinc</keyword>
<accession>A5D5M0</accession>
<comment type="catalytic activity">
    <reaction evidence="1">
        <text>tRNA(Cys) + L-cysteine + ATP = L-cysteinyl-tRNA(Cys) + AMP + diphosphate</text>
        <dbReference type="Rhea" id="RHEA:17773"/>
        <dbReference type="Rhea" id="RHEA-COMP:9661"/>
        <dbReference type="Rhea" id="RHEA-COMP:9679"/>
        <dbReference type="ChEBI" id="CHEBI:30616"/>
        <dbReference type="ChEBI" id="CHEBI:33019"/>
        <dbReference type="ChEBI" id="CHEBI:35235"/>
        <dbReference type="ChEBI" id="CHEBI:78442"/>
        <dbReference type="ChEBI" id="CHEBI:78517"/>
        <dbReference type="ChEBI" id="CHEBI:456215"/>
        <dbReference type="EC" id="6.1.1.16"/>
    </reaction>
</comment>
<comment type="cofactor">
    <cofactor evidence="1">
        <name>Zn(2+)</name>
        <dbReference type="ChEBI" id="CHEBI:29105"/>
    </cofactor>
    <text evidence="1">Binds 1 zinc ion per subunit.</text>
</comment>
<comment type="subunit">
    <text evidence="1">Monomer.</text>
</comment>
<comment type="subcellular location">
    <subcellularLocation>
        <location evidence="1">Cytoplasm</location>
    </subcellularLocation>
</comment>
<comment type="similarity">
    <text evidence="1">Belongs to the class-I aminoacyl-tRNA synthetase family.</text>
</comment>
<dbReference type="EC" id="6.1.1.16" evidence="1"/>
<dbReference type="EMBL" id="AP009389">
    <property type="protein sequence ID" value="BAF58476.1"/>
    <property type="molecule type" value="Genomic_DNA"/>
</dbReference>
<dbReference type="SMR" id="A5D5M0"/>
<dbReference type="STRING" id="370438.PTH_0295"/>
<dbReference type="KEGG" id="pth:PTH_0295"/>
<dbReference type="eggNOG" id="COG0215">
    <property type="taxonomic scope" value="Bacteria"/>
</dbReference>
<dbReference type="HOGENOM" id="CLU_013528_0_1_9"/>
<dbReference type="Proteomes" id="UP000006556">
    <property type="component" value="Chromosome"/>
</dbReference>
<dbReference type="GO" id="GO:0005829">
    <property type="term" value="C:cytosol"/>
    <property type="evidence" value="ECO:0007669"/>
    <property type="project" value="TreeGrafter"/>
</dbReference>
<dbReference type="GO" id="GO:0005524">
    <property type="term" value="F:ATP binding"/>
    <property type="evidence" value="ECO:0007669"/>
    <property type="project" value="UniProtKB-UniRule"/>
</dbReference>
<dbReference type="GO" id="GO:0004817">
    <property type="term" value="F:cysteine-tRNA ligase activity"/>
    <property type="evidence" value="ECO:0007669"/>
    <property type="project" value="UniProtKB-UniRule"/>
</dbReference>
<dbReference type="GO" id="GO:0008270">
    <property type="term" value="F:zinc ion binding"/>
    <property type="evidence" value="ECO:0007669"/>
    <property type="project" value="UniProtKB-UniRule"/>
</dbReference>
<dbReference type="GO" id="GO:0006423">
    <property type="term" value="P:cysteinyl-tRNA aminoacylation"/>
    <property type="evidence" value="ECO:0007669"/>
    <property type="project" value="UniProtKB-UniRule"/>
</dbReference>
<dbReference type="CDD" id="cd00672">
    <property type="entry name" value="CysRS_core"/>
    <property type="match status" value="1"/>
</dbReference>
<dbReference type="FunFam" id="3.40.50.620:FF:000009">
    <property type="entry name" value="Cysteine--tRNA ligase"/>
    <property type="match status" value="1"/>
</dbReference>
<dbReference type="Gene3D" id="1.20.120.1910">
    <property type="entry name" value="Cysteine-tRNA ligase, C-terminal anti-codon recognition domain"/>
    <property type="match status" value="1"/>
</dbReference>
<dbReference type="Gene3D" id="3.40.50.620">
    <property type="entry name" value="HUPs"/>
    <property type="match status" value="1"/>
</dbReference>
<dbReference type="HAMAP" id="MF_00041">
    <property type="entry name" value="Cys_tRNA_synth"/>
    <property type="match status" value="1"/>
</dbReference>
<dbReference type="InterPro" id="IPR015803">
    <property type="entry name" value="Cys-tRNA-ligase"/>
</dbReference>
<dbReference type="InterPro" id="IPR015273">
    <property type="entry name" value="Cys-tRNA-synt_Ia_DALR"/>
</dbReference>
<dbReference type="InterPro" id="IPR024909">
    <property type="entry name" value="Cys-tRNA/MSH_ligase"/>
</dbReference>
<dbReference type="InterPro" id="IPR056411">
    <property type="entry name" value="CysS_C"/>
</dbReference>
<dbReference type="InterPro" id="IPR014729">
    <property type="entry name" value="Rossmann-like_a/b/a_fold"/>
</dbReference>
<dbReference type="InterPro" id="IPR032678">
    <property type="entry name" value="tRNA-synt_1_cat_dom"/>
</dbReference>
<dbReference type="InterPro" id="IPR009080">
    <property type="entry name" value="tRNAsynth_Ia_anticodon-bd"/>
</dbReference>
<dbReference type="NCBIfam" id="TIGR00435">
    <property type="entry name" value="cysS"/>
    <property type="match status" value="1"/>
</dbReference>
<dbReference type="PANTHER" id="PTHR10890:SF3">
    <property type="entry name" value="CYSTEINE--TRNA LIGASE, CYTOPLASMIC"/>
    <property type="match status" value="1"/>
</dbReference>
<dbReference type="PANTHER" id="PTHR10890">
    <property type="entry name" value="CYSTEINYL-TRNA SYNTHETASE"/>
    <property type="match status" value="1"/>
</dbReference>
<dbReference type="Pfam" id="PF23493">
    <property type="entry name" value="CysS_C"/>
    <property type="match status" value="1"/>
</dbReference>
<dbReference type="Pfam" id="PF09190">
    <property type="entry name" value="DALR_2"/>
    <property type="match status" value="1"/>
</dbReference>
<dbReference type="Pfam" id="PF01406">
    <property type="entry name" value="tRNA-synt_1e"/>
    <property type="match status" value="1"/>
</dbReference>
<dbReference type="PRINTS" id="PR00983">
    <property type="entry name" value="TRNASYNTHCYS"/>
</dbReference>
<dbReference type="SMART" id="SM00840">
    <property type="entry name" value="DALR_2"/>
    <property type="match status" value="1"/>
</dbReference>
<dbReference type="SUPFAM" id="SSF47323">
    <property type="entry name" value="Anticodon-binding domain of a subclass of class I aminoacyl-tRNA synthetases"/>
    <property type="match status" value="1"/>
</dbReference>
<dbReference type="SUPFAM" id="SSF52374">
    <property type="entry name" value="Nucleotidylyl transferase"/>
    <property type="match status" value="1"/>
</dbReference>
<gene>
    <name evidence="1" type="primary">cysS</name>
    <name type="ordered locus">PTH_0295</name>
</gene>
<feature type="chain" id="PRO_0000332866" description="Cysteine--tRNA ligase">
    <location>
        <begin position="1"/>
        <end position="484"/>
    </location>
</feature>
<feature type="short sequence motif" description="'HIGH' region">
    <location>
        <begin position="29"/>
        <end position="39"/>
    </location>
</feature>
<feature type="short sequence motif" description="'KMSKS' region">
    <location>
        <begin position="264"/>
        <end position="268"/>
    </location>
</feature>
<feature type="binding site" evidence="1">
    <location>
        <position position="27"/>
    </location>
    <ligand>
        <name>Zn(2+)</name>
        <dbReference type="ChEBI" id="CHEBI:29105"/>
    </ligand>
</feature>
<feature type="binding site" evidence="1">
    <location>
        <position position="207"/>
    </location>
    <ligand>
        <name>Zn(2+)</name>
        <dbReference type="ChEBI" id="CHEBI:29105"/>
    </ligand>
</feature>
<feature type="binding site" evidence="1">
    <location>
        <position position="232"/>
    </location>
    <ligand>
        <name>Zn(2+)</name>
        <dbReference type="ChEBI" id="CHEBI:29105"/>
    </ligand>
</feature>
<feature type="binding site" evidence="1">
    <location>
        <position position="236"/>
    </location>
    <ligand>
        <name>Zn(2+)</name>
        <dbReference type="ChEBI" id="CHEBI:29105"/>
    </ligand>
</feature>
<feature type="binding site" evidence="1">
    <location>
        <position position="267"/>
    </location>
    <ligand>
        <name>ATP</name>
        <dbReference type="ChEBI" id="CHEBI:30616"/>
    </ligand>
</feature>
<proteinExistence type="inferred from homology"/>
<protein>
    <recommendedName>
        <fullName evidence="1">Cysteine--tRNA ligase</fullName>
        <ecNumber evidence="1">6.1.1.16</ecNumber>
    </recommendedName>
    <alternativeName>
        <fullName evidence="1">Cysteinyl-tRNA synthetase</fullName>
        <shortName evidence="1">CysRS</shortName>
    </alternativeName>
</protein>
<sequence>MEIYNTLTRRKENFQPREPGRVCMYVCGPTTYNYIHLGNARPLVFFDTVRRYLIHKGYEVLFVQNFTDVDDKIINRAQEEGDDPLALARRYIGEYFKDADALNVRRADRHPLVSEHIPDIIKMVDELVKKGAAYVVDGNVYFEVRKFAGYGKLSGRTLEDMQAGARVEVDPRKRDPLDFALWKAAKPGEPCWDSPWGPGRPGWHIECSAMSLKYLGTNFDIHGGGYDLIFPHHENEIAQSEAATGQPFVRYWMHNGFITVNEEKMSKSLGNFFLVRDILAKFPPELVRFFLLSTHYRSPLDFDGEKMAAAGRGLERIKTSLRLLYEALERPVSEGVQAVCSRDPFDEIRASFEAAMDDDFNTALAIGAVFDLAREANTAVQRTGPAVSGQDRQILQYALDLFNEFNEVLGIFKVDGASGRLLIDGAAGDDSGLVEGLINLILEVRQEARKRKDWSTADRIRDGLKELGILLEDTPQGVRWKKQG</sequence>
<name>SYC_PELTS</name>